<feature type="chain" id="PRO_0000184152" description="Transcriptional activator protein ExpR">
    <location>
        <begin position="1"/>
        <end position="245"/>
    </location>
</feature>
<feature type="domain" description="HTH luxR-type" evidence="1">
    <location>
        <begin position="173"/>
        <end position="238"/>
    </location>
</feature>
<feature type="DNA-binding region" description="H-T-H motif" evidence="1">
    <location>
        <begin position="197"/>
        <end position="216"/>
    </location>
</feature>
<accession>Q47189</accession>
<accession>K4FNI9</accession>
<keyword id="KW-0010">Activator</keyword>
<keyword id="KW-0238">DNA-binding</keyword>
<keyword id="KW-0673">Quorum sensing</keyword>
<keyword id="KW-0804">Transcription</keyword>
<keyword id="KW-0805">Transcription regulation</keyword>
<keyword id="KW-0843">Virulence</keyword>
<evidence type="ECO:0000255" key="1">
    <source>
        <dbReference type="PROSITE-ProRule" id="PRU00411"/>
    </source>
</evidence>
<evidence type="ECO:0000305" key="2"/>
<dbReference type="EMBL" id="X80475">
    <property type="protein sequence ID" value="CAA56646.1"/>
    <property type="molecule type" value="Genomic_DNA"/>
</dbReference>
<dbReference type="EMBL" id="CP003415">
    <property type="protein sequence ID" value="AFI92652.1"/>
    <property type="molecule type" value="Genomic_DNA"/>
</dbReference>
<dbReference type="PIR" id="S49900">
    <property type="entry name" value="S49900"/>
</dbReference>
<dbReference type="RefSeq" id="WP_014702024.1">
    <property type="nucleotide sequence ID" value="NZ_WABT01000012.1"/>
</dbReference>
<dbReference type="SMR" id="Q47189"/>
<dbReference type="STRING" id="1905730.W5S_4606"/>
<dbReference type="KEGG" id="pec:W5S_4606"/>
<dbReference type="PATRIC" id="fig|1166016.3.peg.4668"/>
<dbReference type="eggNOG" id="COG2771">
    <property type="taxonomic scope" value="Bacteria"/>
</dbReference>
<dbReference type="HOGENOM" id="CLU_072786_5_0_6"/>
<dbReference type="OMA" id="GFERFAY"/>
<dbReference type="Proteomes" id="UP000008044">
    <property type="component" value="Chromosome"/>
</dbReference>
<dbReference type="GO" id="GO:0003677">
    <property type="term" value="F:DNA binding"/>
    <property type="evidence" value="ECO:0007669"/>
    <property type="project" value="UniProtKB-KW"/>
</dbReference>
<dbReference type="GO" id="GO:0009372">
    <property type="term" value="P:quorum sensing"/>
    <property type="evidence" value="ECO:0007669"/>
    <property type="project" value="UniProtKB-KW"/>
</dbReference>
<dbReference type="GO" id="GO:0006355">
    <property type="term" value="P:regulation of DNA-templated transcription"/>
    <property type="evidence" value="ECO:0007669"/>
    <property type="project" value="InterPro"/>
</dbReference>
<dbReference type="CDD" id="cd06170">
    <property type="entry name" value="LuxR_C_like"/>
    <property type="match status" value="1"/>
</dbReference>
<dbReference type="Gene3D" id="3.30.450.80">
    <property type="entry name" value="Transcription factor LuxR-like, autoinducer-binding domain"/>
    <property type="match status" value="1"/>
</dbReference>
<dbReference type="Gene3D" id="1.10.10.10">
    <property type="entry name" value="Winged helix-like DNA-binding domain superfamily/Winged helix DNA-binding domain"/>
    <property type="match status" value="1"/>
</dbReference>
<dbReference type="InterPro" id="IPR016032">
    <property type="entry name" value="Sig_transdc_resp-reg_C-effctor"/>
</dbReference>
<dbReference type="InterPro" id="IPR005143">
    <property type="entry name" value="TF_LuxR_autoind-bd_dom"/>
</dbReference>
<dbReference type="InterPro" id="IPR036693">
    <property type="entry name" value="TF_LuxR_autoind-bd_dom_sf"/>
</dbReference>
<dbReference type="InterPro" id="IPR000792">
    <property type="entry name" value="Tscrpt_reg_LuxR_C"/>
</dbReference>
<dbReference type="InterPro" id="IPR036388">
    <property type="entry name" value="WH-like_DNA-bd_sf"/>
</dbReference>
<dbReference type="PANTHER" id="PTHR44688">
    <property type="entry name" value="DNA-BINDING TRANSCRIPTIONAL ACTIVATOR DEVR_DOSR"/>
    <property type="match status" value="1"/>
</dbReference>
<dbReference type="PANTHER" id="PTHR44688:SF16">
    <property type="entry name" value="DNA-BINDING TRANSCRIPTIONAL ACTIVATOR DEVR_DOSR"/>
    <property type="match status" value="1"/>
</dbReference>
<dbReference type="Pfam" id="PF03472">
    <property type="entry name" value="Autoind_bind"/>
    <property type="match status" value="1"/>
</dbReference>
<dbReference type="Pfam" id="PF00196">
    <property type="entry name" value="GerE"/>
    <property type="match status" value="1"/>
</dbReference>
<dbReference type="PRINTS" id="PR00038">
    <property type="entry name" value="HTHLUXR"/>
</dbReference>
<dbReference type="SMART" id="SM00421">
    <property type="entry name" value="HTH_LUXR"/>
    <property type="match status" value="1"/>
</dbReference>
<dbReference type="SUPFAM" id="SSF46894">
    <property type="entry name" value="C-terminal effector domain of the bipartite response regulators"/>
    <property type="match status" value="1"/>
</dbReference>
<dbReference type="SUPFAM" id="SSF75516">
    <property type="entry name" value="Pheromone-binding domain of LuxR-like quorum-sensing transcription factors"/>
    <property type="match status" value="1"/>
</dbReference>
<dbReference type="PROSITE" id="PS00622">
    <property type="entry name" value="HTH_LUXR_1"/>
    <property type="match status" value="1"/>
</dbReference>
<dbReference type="PROSITE" id="PS50043">
    <property type="entry name" value="HTH_LUXR_2"/>
    <property type="match status" value="1"/>
</dbReference>
<protein>
    <recommendedName>
        <fullName>Transcriptional activator protein ExpR</fullName>
    </recommendedName>
</protein>
<name>EXPR_PECPM</name>
<sequence length="245" mass="28540">MSQLFYNNETISRIIKSQFDMALSHYGDIKYAYMVLNKKKPTEILIISNHHDEWREIYQANNYQHIDPVVIAALNKITPFPWDEDLLVSTQLKMSKIFNLSREHNITNGYTFVLHDHSNNLVMLSIMIDESNVSNIDDVIESNKDKLQMTLMTIHAETISLYREMIRNKEDERSNDKDIFSQRENEILYWASMGKTYQEIALILDIKTGTVKFHIGNVVKKLGVLNAKHAIRLGIELQLIRPVQS</sequence>
<reference key="1">
    <citation type="submission" date="1994-12" db="EMBL/GenBank/DDBJ databases">
        <authorList>
            <person name="Heikinheimo R."/>
            <person name="Mae A."/>
            <person name="Flego D."/>
            <person name="Pirhonen M."/>
            <person name="Koiv V."/>
            <person name="Palva E.T."/>
        </authorList>
    </citation>
    <scope>NUCLEOTIDE SEQUENCE [GENOMIC DNA]</scope>
    <source>
        <strain>SCC3193</strain>
    </source>
</reference>
<reference key="2">
    <citation type="journal article" date="2012" name="J. Bacteriol.">
        <title>Genome sequence of Pectobacterium sp. strain SCC3193.</title>
        <authorList>
            <person name="Koskinen J.P."/>
            <person name="Laine P."/>
            <person name="Niemi O."/>
            <person name="Nykyri J."/>
            <person name="Harjunpaa H."/>
            <person name="Auvinen P."/>
            <person name="Paulin L."/>
            <person name="Pirhonen M."/>
            <person name="Palva T."/>
            <person name="Holm L."/>
        </authorList>
    </citation>
    <scope>NUCLEOTIDE SEQUENCE [LARGE SCALE GENOMIC DNA]</scope>
    <source>
        <strain>SCC3193</strain>
    </source>
</reference>
<comment type="function">
    <text>Functions as an OHLL responsive transcriptional regulator that acts in virulence (soft rot disease) through the activation of genes for plant tissue macerating enzymes.</text>
</comment>
<comment type="similarity">
    <text evidence="2">Belongs to the autoinducer-regulated transcriptional regulatory protein family.</text>
</comment>
<organism>
    <name type="scientific">Pectobacterium parmentieri</name>
    <dbReference type="NCBI Taxonomy" id="1905730"/>
    <lineage>
        <taxon>Bacteria</taxon>
        <taxon>Pseudomonadati</taxon>
        <taxon>Pseudomonadota</taxon>
        <taxon>Gammaproteobacteria</taxon>
        <taxon>Enterobacterales</taxon>
        <taxon>Pectobacteriaceae</taxon>
        <taxon>Pectobacterium</taxon>
    </lineage>
</organism>
<gene>
    <name type="primary">expR</name>
    <name type="ordered locus">W5S_4606</name>
</gene>
<proteinExistence type="inferred from homology"/>